<accession>C0HK84</accession>
<reference evidence="3" key="1">
    <citation type="journal article" date="2010" name="Comp. Biochem. Physiol.">
        <title>Antimicrobial peptides with therapeutic potential from skin secretions of the Marsabit clawed frog Xenopus borealis (Pipidae).</title>
        <authorList>
            <person name="Mechkarska M."/>
            <person name="Ahmed E."/>
            <person name="Coquet L."/>
            <person name="Leprince J."/>
            <person name="Jouenne T."/>
            <person name="Vaudry H."/>
            <person name="King J.D."/>
            <person name="Conlon J.M."/>
        </authorList>
    </citation>
    <scope>PROTEIN SEQUENCE</scope>
    <scope>FUNCTION</scope>
    <scope>SUBCELLULAR LOCATION</scope>
    <scope>MASS SPECTROMETRY</scope>
    <source>
        <tissue evidence="2">Skin secretion</tissue>
    </source>
</reference>
<organism evidence="2">
    <name type="scientific">Xenopus borealis</name>
    <name type="common">Kenyan clawed frog</name>
    <dbReference type="NCBI Taxonomy" id="8354"/>
    <lineage>
        <taxon>Eukaryota</taxon>
        <taxon>Metazoa</taxon>
        <taxon>Chordata</taxon>
        <taxon>Craniata</taxon>
        <taxon>Vertebrata</taxon>
        <taxon>Euteleostomi</taxon>
        <taxon>Amphibia</taxon>
        <taxon>Batrachia</taxon>
        <taxon>Anura</taxon>
        <taxon>Pipoidea</taxon>
        <taxon>Pipidae</taxon>
        <taxon>Xenopodinae</taxon>
        <taxon>Xenopus</taxon>
        <taxon>Xenopus</taxon>
    </lineage>
</organism>
<evidence type="ECO:0000269" key="1">
    <source>
    </source>
</evidence>
<evidence type="ECO:0000303" key="2">
    <source>
    </source>
</evidence>
<evidence type="ECO:0000305" key="3"/>
<evidence type="ECO:0000305" key="4">
    <source>
    </source>
</evidence>
<sequence>GIGKFLHSAGKFGKAFLGEVMKS</sequence>
<name>MAGB2_XENBO</name>
<dbReference type="GO" id="GO:0005576">
    <property type="term" value="C:extracellular region"/>
    <property type="evidence" value="ECO:0007669"/>
    <property type="project" value="UniProtKB-SubCell"/>
</dbReference>
<dbReference type="GO" id="GO:0042742">
    <property type="term" value="P:defense response to bacterium"/>
    <property type="evidence" value="ECO:0007669"/>
    <property type="project" value="UniProtKB-KW"/>
</dbReference>
<dbReference type="GO" id="GO:0050832">
    <property type="term" value="P:defense response to fungus"/>
    <property type="evidence" value="ECO:0007669"/>
    <property type="project" value="UniProtKB-KW"/>
</dbReference>
<dbReference type="GO" id="GO:0031640">
    <property type="term" value="P:killing of cells of another organism"/>
    <property type="evidence" value="ECO:0007669"/>
    <property type="project" value="UniProtKB-KW"/>
</dbReference>
<comment type="function">
    <text evidence="1">Has antimicrobial activity against Gram-negative bacterium E.coli ATCC 25922 (MIC=50 uM) and against fungus C.albicans ATCC 90028 (MIC=100 uM). Has no hemolytic activity against human erythrocytes even at high concentrations.</text>
</comment>
<comment type="subcellular location">
    <subcellularLocation>
        <location evidence="1">Secreted</location>
    </subcellularLocation>
</comment>
<comment type="tissue specificity">
    <text evidence="4">Expressed by the skin glands.</text>
</comment>
<comment type="mass spectrometry"/>
<comment type="similarity">
    <text evidence="3">Belongs to the gastrin/cholecystokinin family. Magainin subfamily.</text>
</comment>
<feature type="peptide" id="PRO_0000438424" description="Magainin-B2" evidence="1">
    <location>
        <begin position="1"/>
        <end position="23"/>
    </location>
</feature>
<keyword id="KW-0044">Antibiotic</keyword>
<keyword id="KW-0929">Antimicrobial</keyword>
<keyword id="KW-0903">Direct protein sequencing</keyword>
<keyword id="KW-0295">Fungicide</keyword>
<keyword id="KW-0964">Secreted</keyword>
<proteinExistence type="evidence at protein level"/>
<protein>
    <recommendedName>
        <fullName evidence="2">Magainin-B2</fullName>
    </recommendedName>
</protein>